<protein>
    <recommendedName>
        <fullName evidence="3">Synaptotagmin-1</fullName>
    </recommendedName>
    <alternativeName>
        <fullName evidence="3">Synaptotagmin I</fullName>
        <shortName>SytI</shortName>
    </alternativeName>
</protein>
<name>SYT1_MACFA</name>
<reference key="1">
    <citation type="submission" date="2003-10" db="EMBL/GenBank/DDBJ databases">
        <title>Isolation and characterization of cDNA for macaque neurological disease genes.</title>
        <authorList>
            <person name="Kusuda J."/>
            <person name="Osada N."/>
            <person name="Tanuma R."/>
            <person name="Hirata M."/>
            <person name="Sugano S."/>
            <person name="Hashimoto K."/>
        </authorList>
    </citation>
    <scope>NUCLEOTIDE SEQUENCE [LARGE SCALE MRNA]</scope>
    <source>
        <tissue>Parietal cortex</tissue>
    </source>
</reference>
<reference key="2">
    <citation type="submission" date="2005-06" db="EMBL/GenBank/DDBJ databases">
        <title>DNA sequences of macaque genes expressed in brain or testis and its evolutionary implications.</title>
        <authorList>
            <consortium name="International consortium for macaque cDNA sequencing and analysis"/>
        </authorList>
    </citation>
    <scope>NUCLEOTIDE SEQUENCE [LARGE SCALE MRNA]</scope>
    <source>
        <tissue>Parietal cortex</tissue>
    </source>
</reference>
<comment type="function">
    <text evidence="2 4">Calcium sensor that participates in triggering neurotransmitter release at the synapse (By similarity). May have a regulatory role in the membrane interactions during trafficking of synaptic vesicles at the active zone of the synapse (By similarity). It binds acidic phospholipids with a specificity that requires the presence of both an acidic head group and a diacyl backbone. A Ca(2+)-dependent interaction between synaptotagmin and putative receptors for activated protein kinase C has also been reported. It can bind to at least three additional proteins in a Ca(2+)-independent manner; these are neurexins, syntaxin and AP2. Plays a role in dendrite formation by melanocytes (By similarity).</text>
</comment>
<comment type="cofactor">
    <cofactor evidence="7">
        <name>Ca(2+)</name>
        <dbReference type="ChEBI" id="CHEBI:29108"/>
    </cofactor>
    <text evidence="3">Binds 3 Ca(2+) ions per subunit. The ions are bound to the C2 domains.</text>
</comment>
<comment type="subunit">
    <text evidence="2 3 4 5 9">Homotetramer (Probable). Heterodimer; heterodimerizes with SYT2 in presence of calcium (By similarity). Interacts with SCAMP5 (By similarity). Interacts with STON2 (By similarity). Forms a complex with SV2B, syntaxin 1 and SNAP25 (By similarity). Interacts with SV2A, SV2B and SV2C (By similarity). Interacts with RIMS1 (By similarity). Interacts with PRRT2 (By similarity). Interacts with DNAJC5 in a phosphorylation-dependent manner (By similarity). Interacts (via N-terminus) with RAB3A (By similarity). Interacts with SYT12 (By similarity). Interacts with calmodulin (By similarity). Interacts with DNM1 (via C-terminal proline-rich domain (PRD)); this interaction facilitates vesicle fission during clathrin-mediated endocytosis (CME) (By similarity).</text>
</comment>
<comment type="subcellular location">
    <subcellularLocation>
        <location evidence="3">Cytoplasmic vesicle</location>
        <location evidence="3">Secretory vesicle membrane</location>
        <topology evidence="6">Single-pass membrane protein</topology>
    </subcellularLocation>
    <subcellularLocation>
        <location evidence="3">Cytoplasmic vesicle</location>
        <location evidence="3">Secretory vesicle</location>
        <location evidence="3">Synaptic vesicle membrane</location>
        <topology evidence="3">Single-pass membrane protein</topology>
    </subcellularLocation>
    <subcellularLocation>
        <location evidence="3">Cytoplasmic vesicle</location>
        <location evidence="3">Secretory vesicle</location>
        <location evidence="3">Chromaffin granule membrane</location>
        <topology evidence="3">Single-pass membrane protein</topology>
    </subcellularLocation>
    <subcellularLocation>
        <location evidence="3">Cytoplasm</location>
    </subcellularLocation>
</comment>
<comment type="domain">
    <text evidence="3">The first C2 domain mediates Ca(2+)-dependent phospholipid binding.</text>
</comment>
<comment type="domain">
    <text evidence="3">The second C2 domain mediates interaction with SV2A and probably with STN2.</text>
</comment>
<comment type="PTM">
    <text evidence="3">Glycosylated.</text>
</comment>
<comment type="similarity">
    <text evidence="9">Belongs to the synaptotagmin family.</text>
</comment>
<evidence type="ECO:0000250" key="1"/>
<evidence type="ECO:0000250" key="2">
    <source>
        <dbReference type="UniProtKB" id="P21579"/>
    </source>
</evidence>
<evidence type="ECO:0000250" key="3">
    <source>
        <dbReference type="UniProtKB" id="P21707"/>
    </source>
</evidence>
<evidence type="ECO:0000250" key="4">
    <source>
        <dbReference type="UniProtKB" id="P46096"/>
    </source>
</evidence>
<evidence type="ECO:0000250" key="5">
    <source>
        <dbReference type="UniProtKB" id="P48018"/>
    </source>
</evidence>
<evidence type="ECO:0000255" key="6"/>
<evidence type="ECO:0000255" key="7">
    <source>
        <dbReference type="PROSITE-ProRule" id="PRU00041"/>
    </source>
</evidence>
<evidence type="ECO:0000256" key="8">
    <source>
        <dbReference type="SAM" id="MobiDB-lite"/>
    </source>
</evidence>
<evidence type="ECO:0000305" key="9"/>
<gene>
    <name evidence="2" type="primary">SYT1</name>
    <name type="ORF">QnpA-13075</name>
</gene>
<organism>
    <name type="scientific">Macaca fascicularis</name>
    <name type="common">Crab-eating macaque</name>
    <name type="synonym">Cynomolgus monkey</name>
    <dbReference type="NCBI Taxonomy" id="9541"/>
    <lineage>
        <taxon>Eukaryota</taxon>
        <taxon>Metazoa</taxon>
        <taxon>Chordata</taxon>
        <taxon>Craniata</taxon>
        <taxon>Vertebrata</taxon>
        <taxon>Euteleostomi</taxon>
        <taxon>Mammalia</taxon>
        <taxon>Eutheria</taxon>
        <taxon>Euarchontoglires</taxon>
        <taxon>Primates</taxon>
        <taxon>Haplorrhini</taxon>
        <taxon>Catarrhini</taxon>
        <taxon>Cercopithecidae</taxon>
        <taxon>Cercopithecinae</taxon>
        <taxon>Macaca</taxon>
    </lineage>
</organism>
<keyword id="KW-0106">Calcium</keyword>
<keyword id="KW-0963">Cytoplasm</keyword>
<keyword id="KW-0968">Cytoplasmic vesicle</keyword>
<keyword id="KW-0221">Differentiation</keyword>
<keyword id="KW-0325">Glycoprotein</keyword>
<keyword id="KW-0449">Lipoprotein</keyword>
<keyword id="KW-0472">Membrane</keyword>
<keyword id="KW-0479">Metal-binding</keyword>
<keyword id="KW-0564">Palmitate</keyword>
<keyword id="KW-0597">Phosphoprotein</keyword>
<keyword id="KW-1185">Reference proteome</keyword>
<keyword id="KW-0677">Repeat</keyword>
<keyword id="KW-0770">Synapse</keyword>
<keyword id="KW-0812">Transmembrane</keyword>
<keyword id="KW-1133">Transmembrane helix</keyword>
<proteinExistence type="evidence at transcript level"/>
<accession>Q60HC0</accession>
<accession>Q4R4H8</accession>
<sequence length="419" mass="47261">MVSESHHEALAAPPVTTVATVLPSNATEPASPGEGKEDAFSKLKEKFMNELHKIPLPPWALIAIAIVAVLLVLTCCFCICKKCLFKKKNKKKGKEKGGKNAINMKDVKDLGKTMKDQDDDAETGLTDGEEKEEPKEEEKLGKLQYSLDYDFQNNQLLVGIIQAAELPALDMGGTSDPYVKVFLLPDKKKKFETKVHRKTLNPVFNEQFTFKVPYSELGGKTLVMAVYDFDRFSKHDIIGEFKVPMNTVDFGHVTEEWRDLQSAEKEEQEKLGDICFSLRYVPTAGKLTVVILEAKNLKKMDVGGLSDPYVKIHLMQNGKRLKKKKTTIKKNTLNPYYNESFSFEVPFEQIQKVQVVVTVLDYDKIGKNDAIGKVFVGYNSTGAELRHWSDMLANPRRPIAQWHTLQVEEEVDAMLAVKK</sequence>
<dbReference type="EMBL" id="AB125207">
    <property type="protein sequence ID" value="BAD51995.1"/>
    <property type="molecule type" value="mRNA"/>
</dbReference>
<dbReference type="EMBL" id="AB169916">
    <property type="protein sequence ID" value="BAE01997.1"/>
    <property type="molecule type" value="mRNA"/>
</dbReference>
<dbReference type="RefSeq" id="NP_001271971.1">
    <property type="nucleotide sequence ID" value="NM_001285042.1"/>
</dbReference>
<dbReference type="RefSeq" id="XP_015286111.1">
    <property type="nucleotide sequence ID" value="XM_015430625.3"/>
</dbReference>
<dbReference type="RefSeq" id="XP_015286112.1">
    <property type="nucleotide sequence ID" value="XM_015430626.3"/>
</dbReference>
<dbReference type="SMR" id="Q60HC0"/>
<dbReference type="STRING" id="9541.ENSMFAP00000034025"/>
<dbReference type="GlyCosmos" id="Q60HC0">
    <property type="glycosylation" value="1 site, No reported glycans"/>
</dbReference>
<dbReference type="Ensembl" id="ENSMFAT00000100771.1">
    <property type="protein sequence ID" value="ENSMFAP00000056158.1"/>
    <property type="gene ID" value="ENSMFAG00000003495.2"/>
</dbReference>
<dbReference type="GeneID" id="101865424"/>
<dbReference type="KEGG" id="mcf:101865424"/>
<dbReference type="CTD" id="6857"/>
<dbReference type="eggNOG" id="KOG1028">
    <property type="taxonomic scope" value="Eukaryota"/>
</dbReference>
<dbReference type="GeneTree" id="ENSGT00940000155394"/>
<dbReference type="Proteomes" id="UP000233100">
    <property type="component" value="Chromosome 11"/>
</dbReference>
<dbReference type="Bgee" id="ENSMFAG00000003495">
    <property type="expression patterns" value="Expressed in frontal cortex and 8 other cell types or tissues"/>
</dbReference>
<dbReference type="GO" id="GO:0030424">
    <property type="term" value="C:axon"/>
    <property type="evidence" value="ECO:0007669"/>
    <property type="project" value="Ensembl"/>
</dbReference>
<dbReference type="GO" id="GO:0042584">
    <property type="term" value="C:chromaffin granule membrane"/>
    <property type="evidence" value="ECO:0007669"/>
    <property type="project" value="UniProtKB-SubCell"/>
</dbReference>
<dbReference type="GO" id="GO:0031045">
    <property type="term" value="C:dense core granule"/>
    <property type="evidence" value="ECO:0007669"/>
    <property type="project" value="Ensembl"/>
</dbReference>
<dbReference type="GO" id="GO:0098978">
    <property type="term" value="C:glutamatergic synapse"/>
    <property type="evidence" value="ECO:0007669"/>
    <property type="project" value="Ensembl"/>
</dbReference>
<dbReference type="GO" id="GO:0005794">
    <property type="term" value="C:Golgi apparatus"/>
    <property type="evidence" value="ECO:0007669"/>
    <property type="project" value="Ensembl"/>
</dbReference>
<dbReference type="GO" id="GO:0042734">
    <property type="term" value="C:presynaptic membrane"/>
    <property type="evidence" value="ECO:0007669"/>
    <property type="project" value="Ensembl"/>
</dbReference>
<dbReference type="GO" id="GO:0030672">
    <property type="term" value="C:synaptic vesicle membrane"/>
    <property type="evidence" value="ECO:0007669"/>
    <property type="project" value="UniProtKB-SubCell"/>
</dbReference>
<dbReference type="GO" id="GO:0005509">
    <property type="term" value="F:calcium ion binding"/>
    <property type="evidence" value="ECO:0007669"/>
    <property type="project" value="Ensembl"/>
</dbReference>
<dbReference type="GO" id="GO:0061891">
    <property type="term" value="F:calcium ion sensor activity"/>
    <property type="evidence" value="ECO:0007669"/>
    <property type="project" value="Ensembl"/>
</dbReference>
<dbReference type="GO" id="GO:0005544">
    <property type="term" value="F:calcium-dependent phospholipid binding"/>
    <property type="evidence" value="ECO:0007669"/>
    <property type="project" value="Ensembl"/>
</dbReference>
<dbReference type="GO" id="GO:0048306">
    <property type="term" value="F:calcium-dependent protein binding"/>
    <property type="evidence" value="ECO:0007669"/>
    <property type="project" value="Ensembl"/>
</dbReference>
<dbReference type="GO" id="GO:0030276">
    <property type="term" value="F:clathrin binding"/>
    <property type="evidence" value="ECO:0007669"/>
    <property type="project" value="TreeGrafter"/>
</dbReference>
<dbReference type="GO" id="GO:0050750">
    <property type="term" value="F:low-density lipoprotein particle receptor binding"/>
    <property type="evidence" value="ECO:0007669"/>
    <property type="project" value="Ensembl"/>
</dbReference>
<dbReference type="GO" id="GO:0001786">
    <property type="term" value="F:phosphatidylserine binding"/>
    <property type="evidence" value="ECO:0007669"/>
    <property type="project" value="TreeGrafter"/>
</dbReference>
<dbReference type="GO" id="GO:0017075">
    <property type="term" value="F:syntaxin-1 binding"/>
    <property type="evidence" value="ECO:0007669"/>
    <property type="project" value="Ensembl"/>
</dbReference>
<dbReference type="GO" id="GO:0099502">
    <property type="term" value="P:calcium-dependent activation of synaptic vesicle fusion"/>
    <property type="evidence" value="ECO:0007669"/>
    <property type="project" value="Ensembl"/>
</dbReference>
<dbReference type="GO" id="GO:0030154">
    <property type="term" value="P:cell differentiation"/>
    <property type="evidence" value="ECO:0007669"/>
    <property type="project" value="UniProtKB-KW"/>
</dbReference>
<dbReference type="GO" id="GO:0098746">
    <property type="term" value="P:fast, calcium ion-dependent exocytosis of neurotransmitter"/>
    <property type="evidence" value="ECO:0007669"/>
    <property type="project" value="Ensembl"/>
</dbReference>
<dbReference type="GO" id="GO:1903235">
    <property type="term" value="P:positive regulation of calcium ion-dependent exocytosis of neurotransmitter"/>
    <property type="evidence" value="ECO:0000250"/>
    <property type="project" value="UniProtKB"/>
</dbReference>
<dbReference type="GO" id="GO:1903861">
    <property type="term" value="P:positive regulation of dendrite extension"/>
    <property type="evidence" value="ECO:0007669"/>
    <property type="project" value="Ensembl"/>
</dbReference>
<dbReference type="GO" id="GO:0014059">
    <property type="term" value="P:regulation of dopamine secretion"/>
    <property type="evidence" value="ECO:0007669"/>
    <property type="project" value="Ensembl"/>
</dbReference>
<dbReference type="GO" id="GO:0051966">
    <property type="term" value="P:regulation of synaptic transmission, glutamatergic"/>
    <property type="evidence" value="ECO:0007669"/>
    <property type="project" value="Ensembl"/>
</dbReference>
<dbReference type="GO" id="GO:0061669">
    <property type="term" value="P:spontaneous neurotransmitter secretion"/>
    <property type="evidence" value="ECO:0007669"/>
    <property type="project" value="Ensembl"/>
</dbReference>
<dbReference type="GO" id="GO:0048488">
    <property type="term" value="P:synaptic vesicle endocytosis"/>
    <property type="evidence" value="ECO:0007669"/>
    <property type="project" value="TreeGrafter"/>
</dbReference>
<dbReference type="GO" id="GO:0071911">
    <property type="term" value="P:synchronous neurotransmitter secretion"/>
    <property type="evidence" value="ECO:0007669"/>
    <property type="project" value="Ensembl"/>
</dbReference>
<dbReference type="GO" id="GO:0016050">
    <property type="term" value="P:vesicle organization"/>
    <property type="evidence" value="ECO:0007669"/>
    <property type="project" value="Ensembl"/>
</dbReference>
<dbReference type="CDD" id="cd08385">
    <property type="entry name" value="C2A_Synaptotagmin-1-5-6-9-10"/>
    <property type="match status" value="1"/>
</dbReference>
<dbReference type="CDD" id="cd08402">
    <property type="entry name" value="C2B_Synaptotagmin-1"/>
    <property type="match status" value="1"/>
</dbReference>
<dbReference type="CDD" id="cd21963">
    <property type="entry name" value="Syt1_N"/>
    <property type="match status" value="1"/>
</dbReference>
<dbReference type="FunFam" id="2.60.40.150:FF:000007">
    <property type="entry name" value="Synaptotagmin 1"/>
    <property type="match status" value="1"/>
</dbReference>
<dbReference type="FunFam" id="2.60.40.150:FF:000016">
    <property type="entry name" value="Synaptotagmin 1"/>
    <property type="match status" value="1"/>
</dbReference>
<dbReference type="Gene3D" id="2.60.40.150">
    <property type="entry name" value="C2 domain"/>
    <property type="match status" value="2"/>
</dbReference>
<dbReference type="InterPro" id="IPR000008">
    <property type="entry name" value="C2_dom"/>
</dbReference>
<dbReference type="InterPro" id="IPR035892">
    <property type="entry name" value="C2_domain_sf"/>
</dbReference>
<dbReference type="InterPro" id="IPR001565">
    <property type="entry name" value="Synaptotagmin"/>
</dbReference>
<dbReference type="PANTHER" id="PTHR10024">
    <property type="entry name" value="SYNAPTOTAGMIN"/>
    <property type="match status" value="1"/>
</dbReference>
<dbReference type="PANTHER" id="PTHR10024:SF239">
    <property type="entry name" value="SYNAPTOTAGMIN-1"/>
    <property type="match status" value="1"/>
</dbReference>
<dbReference type="Pfam" id="PF00168">
    <property type="entry name" value="C2"/>
    <property type="match status" value="2"/>
</dbReference>
<dbReference type="PRINTS" id="PR00360">
    <property type="entry name" value="C2DOMAIN"/>
</dbReference>
<dbReference type="PRINTS" id="PR00399">
    <property type="entry name" value="SYNAPTOTAGMN"/>
</dbReference>
<dbReference type="SMART" id="SM00239">
    <property type="entry name" value="C2"/>
    <property type="match status" value="2"/>
</dbReference>
<dbReference type="SUPFAM" id="SSF49562">
    <property type="entry name" value="C2 domain (Calcium/lipid-binding domain, CaLB)"/>
    <property type="match status" value="2"/>
</dbReference>
<dbReference type="PROSITE" id="PS50004">
    <property type="entry name" value="C2"/>
    <property type="match status" value="2"/>
</dbReference>
<feature type="chain" id="PRO_0000183937" description="Synaptotagmin-1">
    <location>
        <begin position="1"/>
        <end position="419"/>
    </location>
</feature>
<feature type="topological domain" description="Vesicular" evidence="6">
    <location>
        <begin position="1"/>
        <end position="57"/>
    </location>
</feature>
<feature type="transmembrane region" description="Helical" evidence="6">
    <location>
        <begin position="58"/>
        <end position="80"/>
    </location>
</feature>
<feature type="topological domain" description="Cytoplasmic" evidence="6">
    <location>
        <begin position="81"/>
        <end position="419"/>
    </location>
</feature>
<feature type="domain" description="C2 1" evidence="7">
    <location>
        <begin position="139"/>
        <end position="258"/>
    </location>
</feature>
<feature type="domain" description="C2 2" evidence="7">
    <location>
        <begin position="270"/>
        <end position="403"/>
    </location>
</feature>
<feature type="region of interest" description="Disordered" evidence="8">
    <location>
        <begin position="108"/>
        <end position="139"/>
    </location>
</feature>
<feature type="region of interest" description="Phospholipid binding" evidence="1">
    <location>
        <begin position="133"/>
        <end position="379"/>
    </location>
</feature>
<feature type="compositionally biased region" description="Acidic residues" evidence="8">
    <location>
        <begin position="117"/>
        <end position="131"/>
    </location>
</feature>
<feature type="binding site" evidence="7">
    <location>
        <position position="169"/>
    </location>
    <ligand>
        <name>Ca(2+)</name>
        <dbReference type="ChEBI" id="CHEBI:29108"/>
        <label>2</label>
    </ligand>
</feature>
<feature type="binding site" evidence="7">
    <location>
        <position position="170"/>
    </location>
    <ligand>
        <name>Ca(2+)</name>
        <dbReference type="ChEBI" id="CHEBI:29108"/>
        <label>1</label>
    </ligand>
</feature>
<feature type="binding site" evidence="7">
    <location>
        <position position="170"/>
    </location>
    <ligand>
        <name>Ca(2+)</name>
        <dbReference type="ChEBI" id="CHEBI:29108"/>
        <label>2</label>
    </ligand>
</feature>
<feature type="binding site" evidence="7">
    <location>
        <position position="176"/>
    </location>
    <ligand>
        <name>Ca(2+)</name>
        <dbReference type="ChEBI" id="CHEBI:29108"/>
        <label>1</label>
    </ligand>
</feature>
<feature type="binding site" evidence="7">
    <location>
        <position position="228"/>
    </location>
    <ligand>
        <name>Ca(2+)</name>
        <dbReference type="ChEBI" id="CHEBI:29108"/>
        <label>1</label>
    </ligand>
</feature>
<feature type="binding site" evidence="7">
    <location>
        <position position="228"/>
    </location>
    <ligand>
        <name>Ca(2+)</name>
        <dbReference type="ChEBI" id="CHEBI:29108"/>
        <label>2</label>
    </ligand>
</feature>
<feature type="binding site" evidence="7">
    <location>
        <position position="229"/>
    </location>
    <ligand>
        <name>Ca(2+)</name>
        <dbReference type="ChEBI" id="CHEBI:29108"/>
        <label>1</label>
    </ligand>
</feature>
<feature type="binding site" evidence="7">
    <location>
        <position position="230"/>
    </location>
    <ligand>
        <name>Ca(2+)</name>
        <dbReference type="ChEBI" id="CHEBI:29108"/>
        <label>1</label>
    </ligand>
</feature>
<feature type="binding site" evidence="7">
    <location>
        <position position="230"/>
    </location>
    <ligand>
        <name>Ca(2+)</name>
        <dbReference type="ChEBI" id="CHEBI:29108"/>
        <label>2</label>
    </ligand>
</feature>
<feature type="binding site" evidence="7">
    <location>
        <position position="230"/>
    </location>
    <ligand>
        <name>Ca(2+)</name>
        <dbReference type="ChEBI" id="CHEBI:29108"/>
        <label>3</label>
    </ligand>
</feature>
<feature type="binding site" evidence="7">
    <location>
        <position position="233"/>
    </location>
    <ligand>
        <name>Ca(2+)</name>
        <dbReference type="ChEBI" id="CHEBI:29108"/>
        <label>3</label>
    </ligand>
</feature>
<feature type="binding site" evidence="7">
    <location>
        <position position="234"/>
    </location>
    <ligand>
        <name>Ca(2+)</name>
        <dbReference type="ChEBI" id="CHEBI:29108"/>
        <label>3</label>
    </ligand>
</feature>
<feature type="binding site" evidence="7">
    <location>
        <position position="236"/>
    </location>
    <ligand>
        <name>Ca(2+)</name>
        <dbReference type="ChEBI" id="CHEBI:29108"/>
        <label>2</label>
    </ligand>
</feature>
<feature type="binding site" evidence="7">
    <location>
        <position position="236"/>
    </location>
    <ligand>
        <name>Ca(2+)</name>
        <dbReference type="ChEBI" id="CHEBI:29108"/>
        <label>3</label>
    </ligand>
</feature>
<feature type="binding site" evidence="7">
    <location>
        <position position="301"/>
    </location>
    <ligand>
        <name>Ca(2+)</name>
        <dbReference type="ChEBI" id="CHEBI:29108"/>
        <label>4</label>
    </ligand>
</feature>
<feature type="binding site" evidence="7">
    <location>
        <position position="301"/>
    </location>
    <ligand>
        <name>Ca(2+)</name>
        <dbReference type="ChEBI" id="CHEBI:29108"/>
        <label>5</label>
    </ligand>
</feature>
<feature type="binding site" evidence="7">
    <location>
        <position position="307"/>
    </location>
    <ligand>
        <name>Ca(2+)</name>
        <dbReference type="ChEBI" id="CHEBI:29108"/>
        <label>4</label>
    </ligand>
</feature>
<feature type="binding site" evidence="7">
    <location>
        <position position="361"/>
    </location>
    <ligand>
        <name>Ca(2+)</name>
        <dbReference type="ChEBI" id="CHEBI:29108"/>
        <label>4</label>
    </ligand>
</feature>
<feature type="binding site" evidence="7">
    <location>
        <position position="361"/>
    </location>
    <ligand>
        <name>Ca(2+)</name>
        <dbReference type="ChEBI" id="CHEBI:29108"/>
        <label>5</label>
    </ligand>
</feature>
<feature type="binding site" evidence="7">
    <location>
        <position position="363"/>
    </location>
    <ligand>
        <name>Ca(2+)</name>
        <dbReference type="ChEBI" id="CHEBI:29108"/>
        <label>4</label>
    </ligand>
</feature>
<feature type="binding site" evidence="7">
    <location>
        <position position="363"/>
    </location>
    <ligand>
        <name>Ca(2+)</name>
        <dbReference type="ChEBI" id="CHEBI:29108"/>
        <label>5</label>
    </ligand>
</feature>
<feature type="binding site" evidence="7">
    <location>
        <position position="369"/>
    </location>
    <ligand>
        <name>Ca(2+)</name>
        <dbReference type="ChEBI" id="CHEBI:29108"/>
        <label>5</label>
    </ligand>
</feature>
<feature type="modified residue" description="Phosphothreonine" evidence="2">
    <location>
        <position position="126"/>
    </location>
</feature>
<feature type="modified residue" description="Phosphotyrosine" evidence="4">
    <location>
        <position position="227"/>
    </location>
</feature>
<feature type="modified residue" description="Phosphoserine" evidence="4">
    <location>
        <position position="262"/>
    </location>
</feature>
<feature type="modified residue" description="Phosphoserine" evidence="3">
    <location>
        <position position="340"/>
    </location>
</feature>
<feature type="modified residue" description="Phosphoserine" evidence="3">
    <location>
        <position position="342"/>
    </location>
</feature>
<feature type="lipid moiety-binding region" description="S-palmitoyl cysteine" evidence="3">
    <location>
        <position position="75"/>
    </location>
</feature>
<feature type="lipid moiety-binding region" description="S-palmitoyl cysteine" evidence="3">
    <location>
        <position position="76"/>
    </location>
</feature>
<feature type="lipid moiety-binding region" description="S-palmitoyl cysteine" evidence="3">
    <location>
        <position position="78"/>
    </location>
</feature>
<feature type="lipid moiety-binding region" description="S-palmitoyl cysteine" evidence="3">
    <location>
        <position position="80"/>
    </location>
</feature>
<feature type="lipid moiety-binding region" description="S-palmitoyl cysteine" evidence="3">
    <location>
        <position position="83"/>
    </location>
</feature>
<feature type="glycosylation site" description="N-linked (GlcNAc...) asparagine" evidence="6">
    <location>
        <position position="25"/>
    </location>
</feature>